<evidence type="ECO:0000255" key="1">
    <source>
        <dbReference type="HAMAP-Rule" id="MF_00003"/>
    </source>
</evidence>
<gene>
    <name evidence="1" type="primary">rbfA</name>
    <name type="ordered locus">Tbd_0696</name>
</gene>
<reference key="1">
    <citation type="journal article" date="2006" name="J. Bacteriol.">
        <title>The genome sequence of the obligately chemolithoautotrophic, facultatively anaerobic bacterium Thiobacillus denitrificans.</title>
        <authorList>
            <person name="Beller H.R."/>
            <person name="Chain P.S."/>
            <person name="Letain T.E."/>
            <person name="Chakicherla A."/>
            <person name="Larimer F.W."/>
            <person name="Richardson P.M."/>
            <person name="Coleman M.A."/>
            <person name="Wood A.P."/>
            <person name="Kelly D.P."/>
        </authorList>
    </citation>
    <scope>NUCLEOTIDE SEQUENCE [LARGE SCALE GENOMIC DNA]</scope>
    <source>
        <strain>ATCC 25259 / T1</strain>
    </source>
</reference>
<name>RBFA_THIDA</name>
<proteinExistence type="inferred from homology"/>
<sequence length="124" mass="14221">MPKDFPRARRVADQIQRELPELIRQEVKDPRVGMLTITEVEVNRDMEFAKVYFTTMGGEAEHAACLQGLQRASGFLRSQLSHRMQLRVVPKLTFVYDRSVEHGMALSRLIETAVAEDAKHPKDE</sequence>
<comment type="function">
    <text evidence="1">One of several proteins that assist in the late maturation steps of the functional core of the 30S ribosomal subunit. Associates with free 30S ribosomal subunits (but not with 30S subunits that are part of 70S ribosomes or polysomes). Required for efficient processing of 16S rRNA. May interact with the 5'-terminal helix region of 16S rRNA.</text>
</comment>
<comment type="subunit">
    <text evidence="1">Monomer. Binds 30S ribosomal subunits, but not 50S ribosomal subunits or 70S ribosomes.</text>
</comment>
<comment type="subcellular location">
    <subcellularLocation>
        <location evidence="1">Cytoplasm</location>
    </subcellularLocation>
</comment>
<comment type="similarity">
    <text evidence="1">Belongs to the RbfA family.</text>
</comment>
<organism>
    <name type="scientific">Thiobacillus denitrificans (strain ATCC 25259 / T1)</name>
    <dbReference type="NCBI Taxonomy" id="292415"/>
    <lineage>
        <taxon>Bacteria</taxon>
        <taxon>Pseudomonadati</taxon>
        <taxon>Pseudomonadota</taxon>
        <taxon>Betaproteobacteria</taxon>
        <taxon>Nitrosomonadales</taxon>
        <taxon>Thiobacillaceae</taxon>
        <taxon>Thiobacillus</taxon>
    </lineage>
</organism>
<keyword id="KW-0963">Cytoplasm</keyword>
<keyword id="KW-1185">Reference proteome</keyword>
<keyword id="KW-0690">Ribosome biogenesis</keyword>
<protein>
    <recommendedName>
        <fullName evidence="1">Ribosome-binding factor A</fullName>
    </recommendedName>
</protein>
<feature type="chain" id="PRO_1000000242" description="Ribosome-binding factor A">
    <location>
        <begin position="1"/>
        <end position="124"/>
    </location>
</feature>
<accession>Q3SKX2</accession>
<dbReference type="EMBL" id="CP000116">
    <property type="protein sequence ID" value="AAZ96649.1"/>
    <property type="molecule type" value="Genomic_DNA"/>
</dbReference>
<dbReference type="RefSeq" id="WP_011311208.1">
    <property type="nucleotide sequence ID" value="NC_007404.1"/>
</dbReference>
<dbReference type="SMR" id="Q3SKX2"/>
<dbReference type="STRING" id="292415.Tbd_0696"/>
<dbReference type="KEGG" id="tbd:Tbd_0696"/>
<dbReference type="eggNOG" id="COG0858">
    <property type="taxonomic scope" value="Bacteria"/>
</dbReference>
<dbReference type="HOGENOM" id="CLU_089475_5_0_4"/>
<dbReference type="OrthoDB" id="307788at2"/>
<dbReference type="Proteomes" id="UP000008291">
    <property type="component" value="Chromosome"/>
</dbReference>
<dbReference type="GO" id="GO:0005829">
    <property type="term" value="C:cytosol"/>
    <property type="evidence" value="ECO:0007669"/>
    <property type="project" value="TreeGrafter"/>
</dbReference>
<dbReference type="GO" id="GO:0043024">
    <property type="term" value="F:ribosomal small subunit binding"/>
    <property type="evidence" value="ECO:0007669"/>
    <property type="project" value="TreeGrafter"/>
</dbReference>
<dbReference type="GO" id="GO:0030490">
    <property type="term" value="P:maturation of SSU-rRNA"/>
    <property type="evidence" value="ECO:0007669"/>
    <property type="project" value="UniProtKB-UniRule"/>
</dbReference>
<dbReference type="Gene3D" id="3.30.300.20">
    <property type="match status" value="1"/>
</dbReference>
<dbReference type="HAMAP" id="MF_00003">
    <property type="entry name" value="RbfA"/>
    <property type="match status" value="1"/>
</dbReference>
<dbReference type="InterPro" id="IPR015946">
    <property type="entry name" value="KH_dom-like_a/b"/>
</dbReference>
<dbReference type="InterPro" id="IPR000238">
    <property type="entry name" value="RbfA"/>
</dbReference>
<dbReference type="InterPro" id="IPR023799">
    <property type="entry name" value="RbfA_dom_sf"/>
</dbReference>
<dbReference type="InterPro" id="IPR020053">
    <property type="entry name" value="Ribosome-bd_factorA_CS"/>
</dbReference>
<dbReference type="NCBIfam" id="TIGR00082">
    <property type="entry name" value="rbfA"/>
    <property type="match status" value="1"/>
</dbReference>
<dbReference type="PANTHER" id="PTHR33515">
    <property type="entry name" value="RIBOSOME-BINDING FACTOR A, CHLOROPLASTIC-RELATED"/>
    <property type="match status" value="1"/>
</dbReference>
<dbReference type="PANTHER" id="PTHR33515:SF1">
    <property type="entry name" value="RIBOSOME-BINDING FACTOR A, CHLOROPLASTIC-RELATED"/>
    <property type="match status" value="1"/>
</dbReference>
<dbReference type="Pfam" id="PF02033">
    <property type="entry name" value="RBFA"/>
    <property type="match status" value="1"/>
</dbReference>
<dbReference type="SUPFAM" id="SSF89919">
    <property type="entry name" value="Ribosome-binding factor A, RbfA"/>
    <property type="match status" value="1"/>
</dbReference>
<dbReference type="PROSITE" id="PS01319">
    <property type="entry name" value="RBFA"/>
    <property type="match status" value="1"/>
</dbReference>